<feature type="chain" id="PRO_1000095532" description="Histidine--tRNA ligase">
    <location>
        <begin position="1"/>
        <end position="446"/>
    </location>
</feature>
<reference key="1">
    <citation type="journal article" date="2009" name="J. Bacteriol.">
        <title>The genome of Burkholderia cenocepacia J2315, an epidemic pathogen of cystic fibrosis patients.</title>
        <authorList>
            <person name="Holden M.T."/>
            <person name="Seth-Smith H.M."/>
            <person name="Crossman L.C."/>
            <person name="Sebaihia M."/>
            <person name="Bentley S.D."/>
            <person name="Cerdeno-Tarraga A.M."/>
            <person name="Thomson N.R."/>
            <person name="Bason N."/>
            <person name="Quail M.A."/>
            <person name="Sharp S."/>
            <person name="Cherevach I."/>
            <person name="Churcher C."/>
            <person name="Goodhead I."/>
            <person name="Hauser H."/>
            <person name="Holroyd N."/>
            <person name="Mungall K."/>
            <person name="Scott P."/>
            <person name="Walker D."/>
            <person name="White B."/>
            <person name="Rose H."/>
            <person name="Iversen P."/>
            <person name="Mil-Homens D."/>
            <person name="Rocha E.P."/>
            <person name="Fialho A.M."/>
            <person name="Baldwin A."/>
            <person name="Dowson C."/>
            <person name="Barrell B.G."/>
            <person name="Govan J.R."/>
            <person name="Vandamme P."/>
            <person name="Hart C.A."/>
            <person name="Mahenthiralingam E."/>
            <person name="Parkhill J."/>
        </authorList>
    </citation>
    <scope>NUCLEOTIDE SEQUENCE [LARGE SCALE GENOMIC DNA]</scope>
    <source>
        <strain>ATCC BAA-245 / DSM 16553 / LMG 16656 / NCTC 13227 / J2315 / CF5610</strain>
    </source>
</reference>
<evidence type="ECO:0000255" key="1">
    <source>
        <dbReference type="HAMAP-Rule" id="MF_00127"/>
    </source>
</evidence>
<protein>
    <recommendedName>
        <fullName evidence="1">Histidine--tRNA ligase</fullName>
        <ecNumber evidence="1">6.1.1.21</ecNumber>
    </recommendedName>
    <alternativeName>
        <fullName evidence="1">Histidyl-tRNA synthetase</fullName>
        <shortName evidence="1">HisRS</shortName>
    </alternativeName>
</protein>
<name>SYH_BURCJ</name>
<accession>B4EAW8</accession>
<dbReference type="EC" id="6.1.1.21" evidence="1"/>
<dbReference type="EMBL" id="AM747720">
    <property type="protein sequence ID" value="CAR52183.1"/>
    <property type="molecule type" value="Genomic_DNA"/>
</dbReference>
<dbReference type="RefSeq" id="WP_006483311.1">
    <property type="nucleotide sequence ID" value="NC_011000.1"/>
</dbReference>
<dbReference type="SMR" id="B4EAW8"/>
<dbReference type="GeneID" id="83048608"/>
<dbReference type="KEGG" id="bcj:BCAL1883"/>
<dbReference type="eggNOG" id="COG0124">
    <property type="taxonomic scope" value="Bacteria"/>
</dbReference>
<dbReference type="HOGENOM" id="CLU_025113_1_1_4"/>
<dbReference type="BioCyc" id="BCEN216591:G1G1V-2075-MONOMER"/>
<dbReference type="Proteomes" id="UP000001035">
    <property type="component" value="Chromosome 1"/>
</dbReference>
<dbReference type="GO" id="GO:0005737">
    <property type="term" value="C:cytoplasm"/>
    <property type="evidence" value="ECO:0007669"/>
    <property type="project" value="UniProtKB-SubCell"/>
</dbReference>
<dbReference type="GO" id="GO:0005524">
    <property type="term" value="F:ATP binding"/>
    <property type="evidence" value="ECO:0007669"/>
    <property type="project" value="UniProtKB-UniRule"/>
</dbReference>
<dbReference type="GO" id="GO:0004821">
    <property type="term" value="F:histidine-tRNA ligase activity"/>
    <property type="evidence" value="ECO:0007669"/>
    <property type="project" value="UniProtKB-UniRule"/>
</dbReference>
<dbReference type="GO" id="GO:0006427">
    <property type="term" value="P:histidyl-tRNA aminoacylation"/>
    <property type="evidence" value="ECO:0007669"/>
    <property type="project" value="UniProtKB-UniRule"/>
</dbReference>
<dbReference type="CDD" id="cd00773">
    <property type="entry name" value="HisRS-like_core"/>
    <property type="match status" value="1"/>
</dbReference>
<dbReference type="CDD" id="cd00859">
    <property type="entry name" value="HisRS_anticodon"/>
    <property type="match status" value="1"/>
</dbReference>
<dbReference type="FunFam" id="3.30.930.10:FF:000005">
    <property type="entry name" value="Histidine--tRNA ligase"/>
    <property type="match status" value="1"/>
</dbReference>
<dbReference type="Gene3D" id="3.40.50.800">
    <property type="entry name" value="Anticodon-binding domain"/>
    <property type="match status" value="1"/>
</dbReference>
<dbReference type="Gene3D" id="3.30.930.10">
    <property type="entry name" value="Bira Bifunctional Protein, Domain 2"/>
    <property type="match status" value="1"/>
</dbReference>
<dbReference type="HAMAP" id="MF_00127">
    <property type="entry name" value="His_tRNA_synth"/>
    <property type="match status" value="1"/>
</dbReference>
<dbReference type="InterPro" id="IPR006195">
    <property type="entry name" value="aa-tRNA-synth_II"/>
</dbReference>
<dbReference type="InterPro" id="IPR045864">
    <property type="entry name" value="aa-tRNA-synth_II/BPL/LPL"/>
</dbReference>
<dbReference type="InterPro" id="IPR004154">
    <property type="entry name" value="Anticodon-bd"/>
</dbReference>
<dbReference type="InterPro" id="IPR036621">
    <property type="entry name" value="Anticodon-bd_dom_sf"/>
</dbReference>
<dbReference type="InterPro" id="IPR015807">
    <property type="entry name" value="His-tRNA-ligase"/>
</dbReference>
<dbReference type="InterPro" id="IPR041715">
    <property type="entry name" value="HisRS-like_core"/>
</dbReference>
<dbReference type="InterPro" id="IPR004516">
    <property type="entry name" value="HisRS/HisZ"/>
</dbReference>
<dbReference type="InterPro" id="IPR033656">
    <property type="entry name" value="HisRS_anticodon"/>
</dbReference>
<dbReference type="NCBIfam" id="TIGR00442">
    <property type="entry name" value="hisS"/>
    <property type="match status" value="1"/>
</dbReference>
<dbReference type="PANTHER" id="PTHR43707:SF1">
    <property type="entry name" value="HISTIDINE--TRNA LIGASE, MITOCHONDRIAL-RELATED"/>
    <property type="match status" value="1"/>
</dbReference>
<dbReference type="PANTHER" id="PTHR43707">
    <property type="entry name" value="HISTIDYL-TRNA SYNTHETASE"/>
    <property type="match status" value="1"/>
</dbReference>
<dbReference type="Pfam" id="PF03129">
    <property type="entry name" value="HGTP_anticodon"/>
    <property type="match status" value="1"/>
</dbReference>
<dbReference type="Pfam" id="PF13393">
    <property type="entry name" value="tRNA-synt_His"/>
    <property type="match status" value="1"/>
</dbReference>
<dbReference type="PIRSF" id="PIRSF001549">
    <property type="entry name" value="His-tRNA_synth"/>
    <property type="match status" value="1"/>
</dbReference>
<dbReference type="SUPFAM" id="SSF52954">
    <property type="entry name" value="Class II aaRS ABD-related"/>
    <property type="match status" value="1"/>
</dbReference>
<dbReference type="SUPFAM" id="SSF55681">
    <property type="entry name" value="Class II aaRS and biotin synthetases"/>
    <property type="match status" value="1"/>
</dbReference>
<dbReference type="PROSITE" id="PS50862">
    <property type="entry name" value="AA_TRNA_LIGASE_II"/>
    <property type="match status" value="1"/>
</dbReference>
<sequence length="446" mass="49599">MTEQKRKIEKLTGVKGMNDILPQDAGLWEFFEATVKSLLRAYGYQNIRTPIVEHTQLFTRGIGEVTDIVEKEMYSFTDALNGENLTMRPENTAAVVRASIEHNMLYDGPKRLWYIGPMFRHERPQRGRYRQFHQVGVEALGFAGPDADAEIIMMCQRLWDDLGLTGIKLEINSLGLAEERAAHRVELIKYLEQFADVLDEDAKRRLYTNPLRVLDTKNPALQDIAQNAPKLIDFLGDESRAHFEGLQRLLLANNIPFKINPRLVRGLDYYNLTVFEWVTDKLGAQGTVAAGGRYDPLIEQLGGKPTAACGWAMGIERILELLKEEDLAPEQEGVDVYVVHQGETAREQAFIAAERLRDTGLDVIFHCSADGAPASFKSQMKRADASGAAFAVIFGEEEVANGTVGVKALRGAGAEGEKNVQQTVPVESLTEFLINAMVASAEDGDD</sequence>
<comment type="catalytic activity">
    <reaction evidence="1">
        <text>tRNA(His) + L-histidine + ATP = L-histidyl-tRNA(His) + AMP + diphosphate + H(+)</text>
        <dbReference type="Rhea" id="RHEA:17313"/>
        <dbReference type="Rhea" id="RHEA-COMP:9665"/>
        <dbReference type="Rhea" id="RHEA-COMP:9689"/>
        <dbReference type="ChEBI" id="CHEBI:15378"/>
        <dbReference type="ChEBI" id="CHEBI:30616"/>
        <dbReference type="ChEBI" id="CHEBI:33019"/>
        <dbReference type="ChEBI" id="CHEBI:57595"/>
        <dbReference type="ChEBI" id="CHEBI:78442"/>
        <dbReference type="ChEBI" id="CHEBI:78527"/>
        <dbReference type="ChEBI" id="CHEBI:456215"/>
        <dbReference type="EC" id="6.1.1.21"/>
    </reaction>
</comment>
<comment type="subunit">
    <text evidence="1">Homodimer.</text>
</comment>
<comment type="subcellular location">
    <subcellularLocation>
        <location evidence="1">Cytoplasm</location>
    </subcellularLocation>
</comment>
<comment type="similarity">
    <text evidence="1">Belongs to the class-II aminoacyl-tRNA synthetase family.</text>
</comment>
<gene>
    <name evidence="1" type="primary">hisS</name>
    <name type="ordered locus">BceJ2315_18460</name>
    <name type="ORF">BCAL1883</name>
</gene>
<organism>
    <name type="scientific">Burkholderia cenocepacia (strain ATCC BAA-245 / DSM 16553 / LMG 16656 / NCTC 13227 / J2315 / CF5610)</name>
    <name type="common">Burkholderia cepacia (strain J2315)</name>
    <dbReference type="NCBI Taxonomy" id="216591"/>
    <lineage>
        <taxon>Bacteria</taxon>
        <taxon>Pseudomonadati</taxon>
        <taxon>Pseudomonadota</taxon>
        <taxon>Betaproteobacteria</taxon>
        <taxon>Burkholderiales</taxon>
        <taxon>Burkholderiaceae</taxon>
        <taxon>Burkholderia</taxon>
        <taxon>Burkholderia cepacia complex</taxon>
    </lineage>
</organism>
<keyword id="KW-0030">Aminoacyl-tRNA synthetase</keyword>
<keyword id="KW-0067">ATP-binding</keyword>
<keyword id="KW-0963">Cytoplasm</keyword>
<keyword id="KW-0436">Ligase</keyword>
<keyword id="KW-0547">Nucleotide-binding</keyword>
<keyword id="KW-0648">Protein biosynthesis</keyword>
<proteinExistence type="inferred from homology"/>